<reference key="1">
    <citation type="journal article" date="1995" name="Virology">
        <title>Nucleotide sequence and transcription of the left early region of Streptococcus pneumoniae bacteriophage Cp-1 coding for the terminal protein and the DNA polymerase.</title>
        <authorList>
            <person name="Martin A.C."/>
            <person name="Lopez R."/>
            <person name="Garcia P."/>
        </authorList>
    </citation>
    <scope>NUCLEOTIDE SEQUENCE [GENOMIC DNA]</scope>
</reference>
<reference key="2">
    <citation type="journal article" date="1996" name="J. Virol.">
        <title>Analysis of the complete nucleotide sequence and functional organization of the genome of Streptococcus pneumoniae bacteriophage Cp-1.</title>
        <authorList>
            <person name="Martin A.C."/>
            <person name="Lopez R."/>
            <person name="Garcia P."/>
        </authorList>
    </citation>
    <scope>NUCLEOTIDE SEQUENCE [LARGE SCALE GENOMIC DNA]</scope>
</reference>
<sequence>MTCYYAGDFETTTNEEETEVWLSCFAKVIDYDKLDTFKVNTSLEDFLKSLYLDLDKTYTETGEDEFIIFFHNLKFDGSFLLSFFLNNDIECTYFINDMGVWYSITLEFPDFTLTFRDSLKILNFSIATMAGLFKMPIAKGTTPLLKHKPEVIKPEWIDYIHVDVAILARGIFAMYYEENFTKYTSASEALTEFKRIFRKSKRKFRDFFPILDEKVDDFCRKHIVGAGRLPTLKHRGRTLNQLIDIYDINSMYPATMLQNALPIGIPKRYKGKPKEIKEDHYYIYHIKADFDLKRGYLPTIQIKKKLDALRIGVRTSDYVTTSKNEVIDLYLTNFDLDLFLKHYDATIMYVETLEFQTESDLFDDYITTYRYKKENAQSPAEKQKAKIMLNSLYGKFGAKIISVKKLAYLDDKGILRFKNDDEEEVQPVYAPVALFVTSIARHFIISNAQENYDNFLYADTDSLHLFHSDSLVLDIDPSEFGKWAHEGRAVKAKYLRSKLYIEELIQEDGTTHLDVKGAGMTPEIKEKITFENFVIGATFEGKRASKQIKGGTLIYETTFKIRETDYLV</sequence>
<keyword id="KW-0235">DNA replication</keyword>
<keyword id="KW-0238">DNA-binding</keyword>
<keyword id="KW-0239">DNA-directed DNA polymerase</keyword>
<keyword id="KW-0269">Exonuclease</keyword>
<keyword id="KW-0378">Hydrolase</keyword>
<keyword id="KW-0540">Nuclease</keyword>
<keyword id="KW-0548">Nucleotidyltransferase</keyword>
<keyword id="KW-1185">Reference proteome</keyword>
<keyword id="KW-0808">Transferase</keyword>
<keyword id="KW-1194">Viral DNA replication</keyword>
<feature type="chain" id="PRO_0000046541" description="DNA polymerase">
    <location>
        <begin position="1"/>
        <end position="568"/>
    </location>
</feature>
<protein>
    <recommendedName>
        <fullName>DNA polymerase</fullName>
        <ecNumber>2.7.7.7</ecNumber>
        <ecNumber evidence="1">3.1.11.-</ecNumber>
    </recommendedName>
</protein>
<proteinExistence type="inferred from homology"/>
<comment type="function">
    <text evidence="1">Replicates the viral genomic DNA. This polymerase possesses two enzymatic activities: DNA synthesis (polymerase) and an exonucleolytic activity that degrades single-stranded DNA in the 3'- to 5'-direction for proofreading purpose.</text>
</comment>
<comment type="catalytic activity">
    <reaction>
        <text>DNA(n) + a 2'-deoxyribonucleoside 5'-triphosphate = DNA(n+1) + diphosphate</text>
        <dbReference type="Rhea" id="RHEA:22508"/>
        <dbReference type="Rhea" id="RHEA-COMP:17339"/>
        <dbReference type="Rhea" id="RHEA-COMP:17340"/>
        <dbReference type="ChEBI" id="CHEBI:33019"/>
        <dbReference type="ChEBI" id="CHEBI:61560"/>
        <dbReference type="ChEBI" id="CHEBI:173112"/>
        <dbReference type="EC" id="2.7.7.7"/>
    </reaction>
</comment>
<comment type="miscellaneous">
    <text>This DNA polymerase requires a protein as a primer.</text>
</comment>
<comment type="similarity">
    <text evidence="2">Belongs to the DNA polymerase type-B family.</text>
</comment>
<organismHost>
    <name type="scientific">Streptococcus pneumoniae</name>
    <dbReference type="NCBI Taxonomy" id="1313"/>
</organismHost>
<organism>
    <name type="scientific">Streptococcus phage Cp-1</name>
    <name type="common">Bacteriophage Cp-1</name>
    <dbReference type="NCBI Taxonomy" id="10747"/>
    <lineage>
        <taxon>Viruses</taxon>
        <taxon>Duplodnaviria</taxon>
        <taxon>Heunggongvirae</taxon>
        <taxon>Uroviricota</taxon>
        <taxon>Caudoviricetes</taxon>
        <taxon>Salasmaviridae</taxon>
        <taxon>Cepunavirus</taxon>
        <taxon>Cepunavirus Cp1</taxon>
    </lineage>
</organism>
<dbReference type="EC" id="2.7.7.7"/>
<dbReference type="EC" id="3.1.11.-" evidence="1"/>
<dbReference type="EMBL" id="Z47794">
    <property type="protein sequence ID" value="CAA87725.1"/>
    <property type="molecule type" value="Genomic_DNA"/>
</dbReference>
<dbReference type="PIR" id="S51275">
    <property type="entry name" value="S51275"/>
</dbReference>
<dbReference type="RefSeq" id="NP_044817.1">
    <property type="nucleotide sequence ID" value="NC_001825.1"/>
</dbReference>
<dbReference type="SMR" id="Q37989"/>
<dbReference type="IntAct" id="Q37989">
    <property type="interactions" value="1"/>
</dbReference>
<dbReference type="KEGG" id="vg:1261225"/>
<dbReference type="OrthoDB" id="4562at10239"/>
<dbReference type="Proteomes" id="UP000009089">
    <property type="component" value="Genome"/>
</dbReference>
<dbReference type="GO" id="GO:0003677">
    <property type="term" value="F:DNA binding"/>
    <property type="evidence" value="ECO:0007669"/>
    <property type="project" value="UniProtKB-KW"/>
</dbReference>
<dbReference type="GO" id="GO:0003887">
    <property type="term" value="F:DNA-directed DNA polymerase activity"/>
    <property type="evidence" value="ECO:0007669"/>
    <property type="project" value="UniProtKB-KW"/>
</dbReference>
<dbReference type="GO" id="GO:0004527">
    <property type="term" value="F:exonuclease activity"/>
    <property type="evidence" value="ECO:0007669"/>
    <property type="project" value="UniProtKB-KW"/>
</dbReference>
<dbReference type="GO" id="GO:0001882">
    <property type="term" value="F:nucleoside binding"/>
    <property type="evidence" value="ECO:0007669"/>
    <property type="project" value="InterPro"/>
</dbReference>
<dbReference type="GO" id="GO:0000166">
    <property type="term" value="F:nucleotide binding"/>
    <property type="evidence" value="ECO:0007669"/>
    <property type="project" value="InterPro"/>
</dbReference>
<dbReference type="GO" id="GO:0006260">
    <property type="term" value="P:DNA replication"/>
    <property type="evidence" value="ECO:0007669"/>
    <property type="project" value="UniProtKB-KW"/>
</dbReference>
<dbReference type="GO" id="GO:0039693">
    <property type="term" value="P:viral DNA genome replication"/>
    <property type="evidence" value="ECO:0007669"/>
    <property type="project" value="UniProtKB-KW"/>
</dbReference>
<dbReference type="Gene3D" id="4.10.80.20">
    <property type="entry name" value="DNA polymerase, domain 5"/>
    <property type="match status" value="1"/>
</dbReference>
<dbReference type="Gene3D" id="4.10.80.30">
    <property type="entry name" value="DNA polymerase, domain 6"/>
    <property type="match status" value="1"/>
</dbReference>
<dbReference type="Gene3D" id="1.10.287.690">
    <property type="entry name" value="Helix hairpin bin"/>
    <property type="match status" value="1"/>
</dbReference>
<dbReference type="Gene3D" id="3.90.1600.10">
    <property type="entry name" value="Palm domain of DNA polymerase"/>
    <property type="match status" value="1"/>
</dbReference>
<dbReference type="Gene3D" id="3.30.420.10">
    <property type="entry name" value="Ribonuclease H-like superfamily/Ribonuclease H"/>
    <property type="match status" value="1"/>
</dbReference>
<dbReference type="Gene3D" id="3.30.1770.10">
    <property type="entry name" value="TPR 1 domain of DNA polymerase"/>
    <property type="match status" value="1"/>
</dbReference>
<dbReference type="InterPro" id="IPR006172">
    <property type="entry name" value="DNA-dir_DNA_pol_B"/>
</dbReference>
<dbReference type="InterPro" id="IPR017964">
    <property type="entry name" value="DNA-dir_DNA_pol_B_CS"/>
</dbReference>
<dbReference type="InterPro" id="IPR004868">
    <property type="entry name" value="DNA-dir_DNA_pol_B_mt/vir"/>
</dbReference>
<dbReference type="InterPro" id="IPR014416">
    <property type="entry name" value="DNA-dir_DNA_polB_phi29_vir"/>
</dbReference>
<dbReference type="InterPro" id="IPR043502">
    <property type="entry name" value="DNA/RNA_pol_sf"/>
</dbReference>
<dbReference type="InterPro" id="IPR023211">
    <property type="entry name" value="DNA_pol_palm_dom_sf"/>
</dbReference>
<dbReference type="InterPro" id="IPR012337">
    <property type="entry name" value="RNaseH-like_sf"/>
</dbReference>
<dbReference type="InterPro" id="IPR036397">
    <property type="entry name" value="RNaseH_sf"/>
</dbReference>
<dbReference type="Pfam" id="PF03175">
    <property type="entry name" value="DNA_pol_B_2"/>
    <property type="match status" value="1"/>
</dbReference>
<dbReference type="PIRSF" id="PIRSF004178">
    <property type="entry name" value="Dpol_Bac_phage"/>
    <property type="match status" value="1"/>
</dbReference>
<dbReference type="PRINTS" id="PR00106">
    <property type="entry name" value="DNAPOLB"/>
</dbReference>
<dbReference type="SUPFAM" id="SSF56672">
    <property type="entry name" value="DNA/RNA polymerases"/>
    <property type="match status" value="1"/>
</dbReference>
<dbReference type="SUPFAM" id="SSF53098">
    <property type="entry name" value="Ribonuclease H-like"/>
    <property type="match status" value="1"/>
</dbReference>
<dbReference type="PROSITE" id="PS00116">
    <property type="entry name" value="DNA_POLYMERASE_B"/>
    <property type="match status" value="1"/>
</dbReference>
<evidence type="ECO:0000250" key="1">
    <source>
        <dbReference type="UniProtKB" id="P03680"/>
    </source>
</evidence>
<evidence type="ECO:0000305" key="2"/>
<name>DPOL_BPCP1</name>
<gene>
    <name type="primary">5</name>
</gene>
<accession>Q37989</accession>